<proteinExistence type="inferred from homology"/>
<evidence type="ECO:0000255" key="1">
    <source>
        <dbReference type="HAMAP-Rule" id="MF_01382"/>
    </source>
</evidence>
<evidence type="ECO:0000256" key="2">
    <source>
        <dbReference type="SAM" id="MobiDB-lite"/>
    </source>
</evidence>
<accession>Q72XS9</accession>
<gene>
    <name evidence="1" type="primary">secA</name>
    <name type="ordered locus">BCE_5295</name>
</gene>
<comment type="function">
    <text evidence="1">Part of the Sec protein translocase complex. Interacts with the SecYEG preprotein conducting channel. Has a central role in coupling the hydrolysis of ATP to the transfer of proteins into and across the cell membrane, serving as an ATP-driven molecular motor driving the stepwise translocation of polypeptide chains across the membrane.</text>
</comment>
<comment type="catalytic activity">
    <reaction evidence="1">
        <text>ATP + H2O + cellular proteinSide 1 = ADP + phosphate + cellular proteinSide 2.</text>
        <dbReference type="EC" id="7.4.2.8"/>
    </reaction>
</comment>
<comment type="cofactor">
    <cofactor evidence="1">
        <name>Zn(2+)</name>
        <dbReference type="ChEBI" id="CHEBI:29105"/>
    </cofactor>
    <text evidence="1">May bind 1 zinc ion per subunit.</text>
</comment>
<comment type="subunit">
    <text evidence="1">Monomer and homodimer. Part of the essential Sec protein translocation apparatus which comprises SecA, SecYEG and auxiliary proteins SecDF. Other proteins may also be involved.</text>
</comment>
<comment type="subcellular location">
    <subcellularLocation>
        <location evidence="1">Cell membrane</location>
        <topology evidence="1">Peripheral membrane protein</topology>
        <orientation evidence="1">Cytoplasmic side</orientation>
    </subcellularLocation>
    <subcellularLocation>
        <location evidence="1">Cytoplasm</location>
    </subcellularLocation>
    <text evidence="1">Distribution is 50-50.</text>
</comment>
<comment type="similarity">
    <text evidence="1">Belongs to the SecA family.</text>
</comment>
<keyword id="KW-0067">ATP-binding</keyword>
<keyword id="KW-1003">Cell membrane</keyword>
<keyword id="KW-0963">Cytoplasm</keyword>
<keyword id="KW-0472">Membrane</keyword>
<keyword id="KW-0479">Metal-binding</keyword>
<keyword id="KW-0547">Nucleotide-binding</keyword>
<keyword id="KW-0653">Protein transport</keyword>
<keyword id="KW-1278">Translocase</keyword>
<keyword id="KW-0811">Translocation</keyword>
<keyword id="KW-0813">Transport</keyword>
<keyword id="KW-0862">Zinc</keyword>
<name>SECA_BACC1</name>
<protein>
    <recommendedName>
        <fullName evidence="1">Protein translocase subunit SecA</fullName>
        <ecNumber evidence="1">7.4.2.8</ecNumber>
    </recommendedName>
</protein>
<reference key="1">
    <citation type="journal article" date="2004" name="Nucleic Acids Res.">
        <title>The genome sequence of Bacillus cereus ATCC 10987 reveals metabolic adaptations and a large plasmid related to Bacillus anthracis pXO1.</title>
        <authorList>
            <person name="Rasko D.A."/>
            <person name="Ravel J."/>
            <person name="Oekstad O.A."/>
            <person name="Helgason E."/>
            <person name="Cer R.Z."/>
            <person name="Jiang L."/>
            <person name="Shores K.A."/>
            <person name="Fouts D.E."/>
            <person name="Tourasse N.J."/>
            <person name="Angiuoli S.V."/>
            <person name="Kolonay J.F."/>
            <person name="Nelson W.C."/>
            <person name="Kolstoe A.-B."/>
            <person name="Fraser C.M."/>
            <person name="Read T.D."/>
        </authorList>
    </citation>
    <scope>NUCLEOTIDE SEQUENCE [LARGE SCALE GENOMIC DNA]</scope>
    <source>
        <strain>ATCC 10987 / NRS 248</strain>
    </source>
</reference>
<dbReference type="EC" id="7.4.2.8" evidence="1"/>
<dbReference type="EMBL" id="AE017194">
    <property type="protein sequence ID" value="AAS44195.1"/>
    <property type="molecule type" value="Genomic_DNA"/>
</dbReference>
<dbReference type="SMR" id="Q72XS9"/>
<dbReference type="KEGG" id="bca:BCE_5295"/>
<dbReference type="HOGENOM" id="CLU_005314_3_0_9"/>
<dbReference type="Proteomes" id="UP000002527">
    <property type="component" value="Chromosome"/>
</dbReference>
<dbReference type="GO" id="GO:0031522">
    <property type="term" value="C:cell envelope Sec protein transport complex"/>
    <property type="evidence" value="ECO:0007669"/>
    <property type="project" value="TreeGrafter"/>
</dbReference>
<dbReference type="GO" id="GO:0005829">
    <property type="term" value="C:cytosol"/>
    <property type="evidence" value="ECO:0007669"/>
    <property type="project" value="TreeGrafter"/>
</dbReference>
<dbReference type="GO" id="GO:0005886">
    <property type="term" value="C:plasma membrane"/>
    <property type="evidence" value="ECO:0007669"/>
    <property type="project" value="UniProtKB-SubCell"/>
</dbReference>
<dbReference type="GO" id="GO:0005524">
    <property type="term" value="F:ATP binding"/>
    <property type="evidence" value="ECO:0007669"/>
    <property type="project" value="UniProtKB-UniRule"/>
</dbReference>
<dbReference type="GO" id="GO:0046872">
    <property type="term" value="F:metal ion binding"/>
    <property type="evidence" value="ECO:0007669"/>
    <property type="project" value="UniProtKB-KW"/>
</dbReference>
<dbReference type="GO" id="GO:0008564">
    <property type="term" value="F:protein-exporting ATPase activity"/>
    <property type="evidence" value="ECO:0007669"/>
    <property type="project" value="UniProtKB-EC"/>
</dbReference>
<dbReference type="GO" id="GO:0065002">
    <property type="term" value="P:intracellular protein transmembrane transport"/>
    <property type="evidence" value="ECO:0007669"/>
    <property type="project" value="UniProtKB-UniRule"/>
</dbReference>
<dbReference type="GO" id="GO:0017038">
    <property type="term" value="P:protein import"/>
    <property type="evidence" value="ECO:0007669"/>
    <property type="project" value="InterPro"/>
</dbReference>
<dbReference type="GO" id="GO:0006605">
    <property type="term" value="P:protein targeting"/>
    <property type="evidence" value="ECO:0007669"/>
    <property type="project" value="UniProtKB-UniRule"/>
</dbReference>
<dbReference type="GO" id="GO:0043952">
    <property type="term" value="P:protein transport by the Sec complex"/>
    <property type="evidence" value="ECO:0007669"/>
    <property type="project" value="TreeGrafter"/>
</dbReference>
<dbReference type="CDD" id="cd17928">
    <property type="entry name" value="DEXDc_SecA"/>
    <property type="match status" value="1"/>
</dbReference>
<dbReference type="CDD" id="cd18803">
    <property type="entry name" value="SF2_C_secA"/>
    <property type="match status" value="1"/>
</dbReference>
<dbReference type="FunFam" id="1.10.3060.10:FF:000002">
    <property type="entry name" value="Preprotein translocase subunit SecA"/>
    <property type="match status" value="1"/>
</dbReference>
<dbReference type="FunFam" id="3.40.50.300:FF:000081">
    <property type="entry name" value="Preprotein translocase subunit SecA"/>
    <property type="match status" value="1"/>
</dbReference>
<dbReference type="FunFam" id="3.40.50.300:FF:000429">
    <property type="entry name" value="Preprotein translocase subunit SecA"/>
    <property type="match status" value="1"/>
</dbReference>
<dbReference type="FunFam" id="3.90.1440.10:FF:000001">
    <property type="entry name" value="Preprotein translocase subunit SecA"/>
    <property type="match status" value="1"/>
</dbReference>
<dbReference type="Gene3D" id="1.10.3060.10">
    <property type="entry name" value="Helical scaffold and wing domains of SecA"/>
    <property type="match status" value="1"/>
</dbReference>
<dbReference type="Gene3D" id="3.40.50.300">
    <property type="entry name" value="P-loop containing nucleotide triphosphate hydrolases"/>
    <property type="match status" value="3"/>
</dbReference>
<dbReference type="Gene3D" id="3.90.1440.10">
    <property type="entry name" value="SecA, preprotein cross-linking domain"/>
    <property type="match status" value="1"/>
</dbReference>
<dbReference type="HAMAP" id="MF_01382">
    <property type="entry name" value="SecA"/>
    <property type="match status" value="1"/>
</dbReference>
<dbReference type="InterPro" id="IPR014001">
    <property type="entry name" value="Helicase_ATP-bd"/>
</dbReference>
<dbReference type="InterPro" id="IPR001650">
    <property type="entry name" value="Helicase_C-like"/>
</dbReference>
<dbReference type="InterPro" id="IPR027417">
    <property type="entry name" value="P-loop_NTPase"/>
</dbReference>
<dbReference type="InterPro" id="IPR004027">
    <property type="entry name" value="SEC_C_motif"/>
</dbReference>
<dbReference type="InterPro" id="IPR000185">
    <property type="entry name" value="SecA"/>
</dbReference>
<dbReference type="InterPro" id="IPR020937">
    <property type="entry name" value="SecA_CS"/>
</dbReference>
<dbReference type="InterPro" id="IPR011115">
    <property type="entry name" value="SecA_DEAD"/>
</dbReference>
<dbReference type="InterPro" id="IPR014018">
    <property type="entry name" value="SecA_motor_DEAD"/>
</dbReference>
<dbReference type="InterPro" id="IPR011130">
    <property type="entry name" value="SecA_preprotein_X-link_dom"/>
</dbReference>
<dbReference type="InterPro" id="IPR044722">
    <property type="entry name" value="SecA_SF2_C"/>
</dbReference>
<dbReference type="InterPro" id="IPR011116">
    <property type="entry name" value="SecA_Wing/Scaffold"/>
</dbReference>
<dbReference type="InterPro" id="IPR036266">
    <property type="entry name" value="SecA_Wing/Scaffold_sf"/>
</dbReference>
<dbReference type="InterPro" id="IPR036670">
    <property type="entry name" value="SecA_X-link_sf"/>
</dbReference>
<dbReference type="NCBIfam" id="NF006630">
    <property type="entry name" value="PRK09200.1"/>
    <property type="match status" value="1"/>
</dbReference>
<dbReference type="NCBIfam" id="NF009538">
    <property type="entry name" value="PRK12904.1"/>
    <property type="match status" value="1"/>
</dbReference>
<dbReference type="NCBIfam" id="TIGR00963">
    <property type="entry name" value="secA"/>
    <property type="match status" value="1"/>
</dbReference>
<dbReference type="PANTHER" id="PTHR30612:SF0">
    <property type="entry name" value="CHLOROPLAST PROTEIN-TRANSPORTING ATPASE"/>
    <property type="match status" value="1"/>
</dbReference>
<dbReference type="PANTHER" id="PTHR30612">
    <property type="entry name" value="SECA INNER MEMBRANE COMPONENT OF SEC PROTEIN SECRETION SYSTEM"/>
    <property type="match status" value="1"/>
</dbReference>
<dbReference type="Pfam" id="PF21090">
    <property type="entry name" value="P-loop_SecA"/>
    <property type="match status" value="2"/>
</dbReference>
<dbReference type="Pfam" id="PF02810">
    <property type="entry name" value="SEC-C"/>
    <property type="match status" value="1"/>
</dbReference>
<dbReference type="Pfam" id="PF07517">
    <property type="entry name" value="SecA_DEAD"/>
    <property type="match status" value="1"/>
</dbReference>
<dbReference type="Pfam" id="PF01043">
    <property type="entry name" value="SecA_PP_bind"/>
    <property type="match status" value="1"/>
</dbReference>
<dbReference type="Pfam" id="PF07516">
    <property type="entry name" value="SecA_SW"/>
    <property type="match status" value="1"/>
</dbReference>
<dbReference type="PRINTS" id="PR00906">
    <property type="entry name" value="SECA"/>
</dbReference>
<dbReference type="SMART" id="SM00957">
    <property type="entry name" value="SecA_DEAD"/>
    <property type="match status" value="1"/>
</dbReference>
<dbReference type="SMART" id="SM00958">
    <property type="entry name" value="SecA_PP_bind"/>
    <property type="match status" value="1"/>
</dbReference>
<dbReference type="SUPFAM" id="SSF81886">
    <property type="entry name" value="Helical scaffold and wing domains of SecA"/>
    <property type="match status" value="1"/>
</dbReference>
<dbReference type="SUPFAM" id="SSF52540">
    <property type="entry name" value="P-loop containing nucleoside triphosphate hydrolases"/>
    <property type="match status" value="2"/>
</dbReference>
<dbReference type="SUPFAM" id="SSF81767">
    <property type="entry name" value="Pre-protein crosslinking domain of SecA"/>
    <property type="match status" value="1"/>
</dbReference>
<dbReference type="PROSITE" id="PS01312">
    <property type="entry name" value="SECA"/>
    <property type="match status" value="1"/>
</dbReference>
<dbReference type="PROSITE" id="PS51196">
    <property type="entry name" value="SECA_MOTOR_DEAD"/>
    <property type="match status" value="1"/>
</dbReference>
<feature type="chain" id="PRO_0000318312" description="Protein translocase subunit SecA">
    <location>
        <begin position="1"/>
        <end position="835"/>
    </location>
</feature>
<feature type="region of interest" description="Disordered" evidence="2">
    <location>
        <begin position="788"/>
        <end position="807"/>
    </location>
</feature>
<feature type="binding site" evidence="1">
    <location>
        <position position="85"/>
    </location>
    <ligand>
        <name>ATP</name>
        <dbReference type="ChEBI" id="CHEBI:30616"/>
    </ligand>
</feature>
<feature type="binding site" evidence="1">
    <location>
        <begin position="103"/>
        <end position="107"/>
    </location>
    <ligand>
        <name>ATP</name>
        <dbReference type="ChEBI" id="CHEBI:30616"/>
    </ligand>
</feature>
<feature type="binding site" evidence="1">
    <location>
        <position position="492"/>
    </location>
    <ligand>
        <name>ATP</name>
        <dbReference type="ChEBI" id="CHEBI:30616"/>
    </ligand>
</feature>
<feature type="binding site" evidence="1">
    <location>
        <position position="819"/>
    </location>
    <ligand>
        <name>Zn(2+)</name>
        <dbReference type="ChEBI" id="CHEBI:29105"/>
    </ligand>
</feature>
<feature type="binding site" evidence="1">
    <location>
        <position position="821"/>
    </location>
    <ligand>
        <name>Zn(2+)</name>
        <dbReference type="ChEBI" id="CHEBI:29105"/>
    </ligand>
</feature>
<feature type="binding site" evidence="1">
    <location>
        <position position="830"/>
    </location>
    <ligand>
        <name>Zn(2+)</name>
        <dbReference type="ChEBI" id="CHEBI:29105"/>
    </ligand>
</feature>
<feature type="binding site" evidence="1">
    <location>
        <position position="831"/>
    </location>
    <ligand>
        <name>Zn(2+)</name>
        <dbReference type="ChEBI" id="CHEBI:29105"/>
    </ligand>
</feature>
<organism>
    <name type="scientific">Bacillus cereus (strain ATCC 10987 / NRS 248)</name>
    <dbReference type="NCBI Taxonomy" id="222523"/>
    <lineage>
        <taxon>Bacteria</taxon>
        <taxon>Bacillati</taxon>
        <taxon>Bacillota</taxon>
        <taxon>Bacilli</taxon>
        <taxon>Bacillales</taxon>
        <taxon>Bacillaceae</taxon>
        <taxon>Bacillus</taxon>
        <taxon>Bacillus cereus group</taxon>
    </lineage>
</organism>
<sequence>MIGILKKVFDVNQRQIKRMQKTVEQIDALEPSIKPLTDEQLKGKTLEFKERLTKGETVDDLLPEAFAVVREAATRVLGMRPYGVQLMGGIALHEGNISEMKTGEGKTLTSTLPVYLNALTGKGVHVVTVNEYLAQRDASEMGQLHEFLGLTVGINLNSMSREEKQEAYAADITYSTNNELGFDYLRDNMVLYKEQCVQRPLHFAIIDEVDSILVDEARTPLIISGQAQKSTELYMFANAFVRTLENEKDYSFDVKTKNVMLTEDGITKAEKAFHIENLFDLKHVALLHHINQALRAHVVMHRDTDYVVQEGEIVIVDQFTGRLMKGRRYSEGLHQAIEAKEGVEIQNESMTLATITFQNYFRMYEKLSGMTGTAKTEEEEFRNIYNMNVIVIPTNKPIIRDDRADLIFKSMEGKFNAVVEDIVNRHKQGQPVLVGTVAIETSELISKMLTRKGVRHNILNAKNHAREADIIAEAGIKGAVTIATNMAGRGTDIKLGDDVKNVGLAVIGTERHESRRIDNQLRGRAGRQGDPGVTQFYLSMEDELMRRFGSDNMKAMMDRLGMDDSQPIESKMVSRAVESAQKRVEGNNYDARKQLLQYDDVLRQQREVIYKQRQEVMESENLRGIIEGMMKSTVERAVALHTQEEIEEDWNIKGLVDYLNTNLLQEGDVKEEELRRLAPEEMSEPIIAKLIERYNDKEKLMPEEQMREFEKVVVFRVVDTKWTEHIDAMDHLREGIHLRAYGQIDPLREYQMEGFAMFESMIASIEEEISRYIMKAEIEQNLERQEVVQGEAVHPSSDGEEAKKKPVVKGEQVGRNDLCKCGSGKKYKNCCGIGK</sequence>